<sequence>MFSFFRRKKKQETPAPEEAQIQETVAKVESEVAQIVENIKEDAESLAESVKGQVESAVETVSGAVEQVKETVAEMLSEAEEAAEKAAEQVEAAKEAVAETVGEAVGQVQEAVATTEEHKLGWAARLKQGLTKSRDKMAKSLAGVFGGGQIDEDLYEELETVLITSDMDMEATEYLMKDVRDRVSLKGLKDGNELRGALKEALYDLIKPLEKPLVLPETKEPFVIMLAGINGAGKTTSIGKLAKYFQAQGKSVLLAAGDTFRAAAREQLQAWGERNNVTVISQTTGDSAAVCFDAVQAAKARGIDIVLADTAGRLPTQLHLMEEIKKVKRVLQKAMPDAPHEIIVVLDANIGQNAVNQVKAFDDALGLTGLIVTKLDGTAKGGILAALASDRPVPVRYIGVGEGIDDLRPFDARAFVDALLD</sequence>
<keyword id="KW-1003">Cell membrane</keyword>
<keyword id="KW-0963">Cytoplasm</keyword>
<keyword id="KW-0342">GTP-binding</keyword>
<keyword id="KW-0378">Hydrolase</keyword>
<keyword id="KW-0472">Membrane</keyword>
<keyword id="KW-0547">Nucleotide-binding</keyword>
<keyword id="KW-0675">Receptor</keyword>
<reference key="1">
    <citation type="journal article" date="1997" name="Arch. Biochem. Biophys.">
        <title>Isolation and biochemical characterization of the PilA protein of Neisseria meningitidis.</title>
        <authorList>
            <person name="Arvidson C.G."/>
            <person name="So M."/>
        </authorList>
    </citation>
    <scope>NUCLEOTIDE SEQUENCE [GENOMIC DNA]</scope>
    <source>
        <strain>8013.6 / Serogroup C</strain>
    </source>
</reference>
<evidence type="ECO:0000255" key="1">
    <source>
        <dbReference type="HAMAP-Rule" id="MF_00920"/>
    </source>
</evidence>
<evidence type="ECO:0000256" key="2">
    <source>
        <dbReference type="SAM" id="MobiDB-lite"/>
    </source>
</evidence>
<evidence type="ECO:0000305" key="3">
    <source>
    </source>
</evidence>
<organism>
    <name type="scientific">Neisseria meningitidis serogroup C</name>
    <dbReference type="NCBI Taxonomy" id="135720"/>
    <lineage>
        <taxon>Bacteria</taxon>
        <taxon>Pseudomonadati</taxon>
        <taxon>Pseudomonadota</taxon>
        <taxon>Betaproteobacteria</taxon>
        <taxon>Neisseriales</taxon>
        <taxon>Neisseriaceae</taxon>
        <taxon>Neisseria</taxon>
    </lineage>
</organism>
<protein>
    <recommendedName>
        <fullName evidence="1">Signal recognition particle receptor FtsY</fullName>
        <shortName evidence="1">SRP receptor</shortName>
        <ecNumber evidence="1">3.6.5.4</ecNumber>
    </recommendedName>
</protein>
<dbReference type="EC" id="3.6.5.4" evidence="1"/>
<dbReference type="EMBL" id="AF003940">
    <property type="protein sequence ID" value="AAB97510.1"/>
    <property type="molecule type" value="Genomic_DNA"/>
</dbReference>
<dbReference type="PIR" id="T44429">
    <property type="entry name" value="T44429"/>
</dbReference>
<dbReference type="SMR" id="O30391"/>
<dbReference type="GO" id="GO:0005737">
    <property type="term" value="C:cytoplasm"/>
    <property type="evidence" value="ECO:0007669"/>
    <property type="project" value="UniProtKB-SubCell"/>
</dbReference>
<dbReference type="GO" id="GO:0005886">
    <property type="term" value="C:plasma membrane"/>
    <property type="evidence" value="ECO:0007669"/>
    <property type="project" value="UniProtKB-SubCell"/>
</dbReference>
<dbReference type="GO" id="GO:0016887">
    <property type="term" value="F:ATP hydrolysis activity"/>
    <property type="evidence" value="ECO:0007669"/>
    <property type="project" value="InterPro"/>
</dbReference>
<dbReference type="GO" id="GO:0005525">
    <property type="term" value="F:GTP binding"/>
    <property type="evidence" value="ECO:0007669"/>
    <property type="project" value="UniProtKB-UniRule"/>
</dbReference>
<dbReference type="GO" id="GO:0003924">
    <property type="term" value="F:GTPase activity"/>
    <property type="evidence" value="ECO:0007669"/>
    <property type="project" value="UniProtKB-UniRule"/>
</dbReference>
<dbReference type="GO" id="GO:0005047">
    <property type="term" value="F:signal recognition particle binding"/>
    <property type="evidence" value="ECO:0007669"/>
    <property type="project" value="TreeGrafter"/>
</dbReference>
<dbReference type="GO" id="GO:0006614">
    <property type="term" value="P:SRP-dependent cotranslational protein targeting to membrane"/>
    <property type="evidence" value="ECO:0007669"/>
    <property type="project" value="InterPro"/>
</dbReference>
<dbReference type="CDD" id="cd17874">
    <property type="entry name" value="FtsY"/>
    <property type="match status" value="1"/>
</dbReference>
<dbReference type="FunFam" id="1.20.120.140:FF:000002">
    <property type="entry name" value="Signal recognition particle receptor FtsY"/>
    <property type="match status" value="1"/>
</dbReference>
<dbReference type="FunFam" id="3.40.50.300:FF:000053">
    <property type="entry name" value="Signal recognition particle receptor FtsY"/>
    <property type="match status" value="1"/>
</dbReference>
<dbReference type="Gene3D" id="1.20.120.20">
    <property type="entry name" value="Apolipoprotein"/>
    <property type="match status" value="1"/>
</dbReference>
<dbReference type="Gene3D" id="3.40.50.300">
    <property type="entry name" value="P-loop containing nucleotide triphosphate hydrolases"/>
    <property type="match status" value="1"/>
</dbReference>
<dbReference type="Gene3D" id="1.20.120.140">
    <property type="entry name" value="Signal recognition particle SRP54, nucleotide-binding domain"/>
    <property type="match status" value="1"/>
</dbReference>
<dbReference type="HAMAP" id="MF_00920">
    <property type="entry name" value="FtsY"/>
    <property type="match status" value="1"/>
</dbReference>
<dbReference type="InterPro" id="IPR003593">
    <property type="entry name" value="AAA+_ATPase"/>
</dbReference>
<dbReference type="InterPro" id="IPR027417">
    <property type="entry name" value="P-loop_NTPase"/>
</dbReference>
<dbReference type="InterPro" id="IPR013822">
    <property type="entry name" value="Signal_recog_particl_SRP54_hlx"/>
</dbReference>
<dbReference type="InterPro" id="IPR004390">
    <property type="entry name" value="SR_rcpt_FtsY"/>
</dbReference>
<dbReference type="InterPro" id="IPR036225">
    <property type="entry name" value="SRP/SRP_N"/>
</dbReference>
<dbReference type="InterPro" id="IPR000897">
    <property type="entry name" value="SRP54_GTPase_dom"/>
</dbReference>
<dbReference type="InterPro" id="IPR042101">
    <property type="entry name" value="SRP54_N_sf"/>
</dbReference>
<dbReference type="NCBIfam" id="TIGR00064">
    <property type="entry name" value="ftsY"/>
    <property type="match status" value="1"/>
</dbReference>
<dbReference type="PANTHER" id="PTHR43134">
    <property type="entry name" value="SIGNAL RECOGNITION PARTICLE RECEPTOR SUBUNIT ALPHA"/>
    <property type="match status" value="1"/>
</dbReference>
<dbReference type="PANTHER" id="PTHR43134:SF1">
    <property type="entry name" value="SIGNAL RECOGNITION PARTICLE RECEPTOR SUBUNIT ALPHA"/>
    <property type="match status" value="1"/>
</dbReference>
<dbReference type="Pfam" id="PF00448">
    <property type="entry name" value="SRP54"/>
    <property type="match status" value="1"/>
</dbReference>
<dbReference type="Pfam" id="PF02881">
    <property type="entry name" value="SRP54_N"/>
    <property type="match status" value="1"/>
</dbReference>
<dbReference type="SMART" id="SM00382">
    <property type="entry name" value="AAA"/>
    <property type="match status" value="1"/>
</dbReference>
<dbReference type="SMART" id="SM00962">
    <property type="entry name" value="SRP54"/>
    <property type="match status" value="1"/>
</dbReference>
<dbReference type="SMART" id="SM00963">
    <property type="entry name" value="SRP54_N"/>
    <property type="match status" value="1"/>
</dbReference>
<dbReference type="SUPFAM" id="SSF58113">
    <property type="entry name" value="Apolipoprotein A-I"/>
    <property type="match status" value="1"/>
</dbReference>
<dbReference type="SUPFAM" id="SSF47364">
    <property type="entry name" value="Domain of the SRP/SRP receptor G-proteins"/>
    <property type="match status" value="1"/>
</dbReference>
<dbReference type="SUPFAM" id="SSF52540">
    <property type="entry name" value="P-loop containing nucleoside triphosphate hydrolases"/>
    <property type="match status" value="1"/>
</dbReference>
<dbReference type="PROSITE" id="PS00300">
    <property type="entry name" value="SRP54"/>
    <property type="match status" value="1"/>
</dbReference>
<proteinExistence type="inferred from homology"/>
<comment type="function">
    <text evidence="1">Involved in targeting and insertion of nascent membrane proteins into the cytoplasmic membrane. Acts as a receptor for the complex formed by the signal recognition particle (SRP) and the ribosome-nascent chain (RNC). Interaction with SRP-RNC leads to the transfer of the RNC complex to the Sec translocase for insertion into the membrane, the hydrolysis of GTP by both Ffh and FtsY, and the dissociation of the SRP-FtsY complex into the individual components.</text>
</comment>
<comment type="catalytic activity">
    <reaction evidence="1">
        <text>GTP + H2O = GDP + phosphate + H(+)</text>
        <dbReference type="Rhea" id="RHEA:19669"/>
        <dbReference type="ChEBI" id="CHEBI:15377"/>
        <dbReference type="ChEBI" id="CHEBI:15378"/>
        <dbReference type="ChEBI" id="CHEBI:37565"/>
        <dbReference type="ChEBI" id="CHEBI:43474"/>
        <dbReference type="ChEBI" id="CHEBI:58189"/>
        <dbReference type="EC" id="3.6.5.4"/>
    </reaction>
</comment>
<comment type="subunit">
    <text evidence="1">Part of the signal recognition particle protein translocation system, which is composed of SRP and FtsY. SRP is a ribonucleoprotein composed of Ffh and a 4.5S RNA molecule.</text>
</comment>
<comment type="subcellular location">
    <subcellularLocation>
        <location>Cell membrane</location>
        <topology>Peripheral membrane protein</topology>
        <orientation>Cytoplasmic side</orientation>
    </subcellularLocation>
    <subcellularLocation>
        <location evidence="1">Cytoplasm</location>
    </subcellularLocation>
</comment>
<comment type="similarity">
    <text evidence="1">Belongs to the GTP-binding SRP family. FtsY subfamily.</text>
</comment>
<comment type="caution">
    <text evidence="3">Was originally thought to activate the pilin promoter.</text>
</comment>
<gene>
    <name evidence="1" type="primary">ftsY</name>
    <name type="synonym">pilA</name>
</gene>
<name>FTSY_NEIMC</name>
<feature type="chain" id="PRO_0000101144" description="Signal recognition particle receptor FtsY">
    <location>
        <begin position="1"/>
        <end position="421"/>
    </location>
</feature>
<feature type="region of interest" description="Disordered" evidence="2">
    <location>
        <begin position="1"/>
        <end position="22"/>
    </location>
</feature>
<feature type="compositionally biased region" description="Basic residues" evidence="2">
    <location>
        <begin position="1"/>
        <end position="10"/>
    </location>
</feature>
<feature type="binding site" evidence="1">
    <location>
        <begin position="228"/>
        <end position="235"/>
    </location>
    <ligand>
        <name>GTP</name>
        <dbReference type="ChEBI" id="CHEBI:37565"/>
    </ligand>
</feature>
<feature type="binding site" evidence="1">
    <location>
        <begin position="309"/>
        <end position="313"/>
    </location>
    <ligand>
        <name>GTP</name>
        <dbReference type="ChEBI" id="CHEBI:37565"/>
    </ligand>
</feature>
<feature type="binding site" evidence="1">
    <location>
        <begin position="373"/>
        <end position="376"/>
    </location>
    <ligand>
        <name>GTP</name>
        <dbReference type="ChEBI" id="CHEBI:37565"/>
    </ligand>
</feature>
<accession>O30391</accession>